<evidence type="ECO:0000255" key="1"/>
<evidence type="ECO:0000305" key="2"/>
<protein>
    <recommendedName>
        <fullName>PhoH-like protein</fullName>
    </recommendedName>
</protein>
<keyword id="KW-0067">ATP-binding</keyword>
<keyword id="KW-0963">Cytoplasm</keyword>
<keyword id="KW-0547">Nucleotide-binding</keyword>
<keyword id="KW-1185">Reference proteome</keyword>
<dbReference type="EMBL" id="BA000022">
    <property type="protein sequence ID" value="BAA17115.1"/>
    <property type="molecule type" value="Genomic_DNA"/>
</dbReference>
<dbReference type="PIR" id="S75201">
    <property type="entry name" value="S75201"/>
</dbReference>
<dbReference type="SMR" id="P73090"/>
<dbReference type="FunCoup" id="P73090">
    <property type="interactions" value="288"/>
</dbReference>
<dbReference type="IntAct" id="P73090">
    <property type="interactions" value="1"/>
</dbReference>
<dbReference type="STRING" id="1148.gene:10497976"/>
<dbReference type="PaxDb" id="1148-1652191"/>
<dbReference type="EnsemblBacteria" id="BAA17115">
    <property type="protein sequence ID" value="BAA17115"/>
    <property type="gene ID" value="BAA17115"/>
</dbReference>
<dbReference type="KEGG" id="syn:slr2047"/>
<dbReference type="eggNOG" id="COG1702">
    <property type="taxonomic scope" value="Bacteria"/>
</dbReference>
<dbReference type="InParanoid" id="P73090"/>
<dbReference type="PhylomeDB" id="P73090"/>
<dbReference type="Proteomes" id="UP000001425">
    <property type="component" value="Chromosome"/>
</dbReference>
<dbReference type="GO" id="GO:0005829">
    <property type="term" value="C:cytosol"/>
    <property type="evidence" value="ECO:0000318"/>
    <property type="project" value="GO_Central"/>
</dbReference>
<dbReference type="GO" id="GO:0005524">
    <property type="term" value="F:ATP binding"/>
    <property type="evidence" value="ECO:0000318"/>
    <property type="project" value="GO_Central"/>
</dbReference>
<dbReference type="FunFam" id="3.40.50.300:FF:000013">
    <property type="entry name" value="PhoH family ATPase"/>
    <property type="match status" value="1"/>
</dbReference>
<dbReference type="Gene3D" id="3.40.50.300">
    <property type="entry name" value="P-loop containing nucleotide triphosphate hydrolases"/>
    <property type="match status" value="1"/>
</dbReference>
<dbReference type="InterPro" id="IPR027417">
    <property type="entry name" value="P-loop_NTPase"/>
</dbReference>
<dbReference type="InterPro" id="IPR003714">
    <property type="entry name" value="PhoH"/>
</dbReference>
<dbReference type="InterPro" id="IPR051451">
    <property type="entry name" value="PhoH2-like"/>
</dbReference>
<dbReference type="PANTHER" id="PTHR30473:SF1">
    <property type="entry name" value="PHOH-LIKE PROTEIN"/>
    <property type="match status" value="1"/>
</dbReference>
<dbReference type="PANTHER" id="PTHR30473">
    <property type="entry name" value="PROTEIN PHOH"/>
    <property type="match status" value="1"/>
</dbReference>
<dbReference type="Pfam" id="PF02562">
    <property type="entry name" value="PhoH"/>
    <property type="match status" value="1"/>
</dbReference>
<dbReference type="SUPFAM" id="SSF52540">
    <property type="entry name" value="P-loop containing nucleoside triphosphate hydrolases"/>
    <property type="match status" value="1"/>
</dbReference>
<accession>P73090</accession>
<proteinExistence type="inferred from homology"/>
<reference key="1">
    <citation type="journal article" date="1996" name="DNA Res.">
        <title>Sequence analysis of the genome of the unicellular cyanobacterium Synechocystis sp. strain PCC6803. II. Sequence determination of the entire genome and assignment of potential protein-coding regions.</title>
        <authorList>
            <person name="Kaneko T."/>
            <person name="Sato S."/>
            <person name="Kotani H."/>
            <person name="Tanaka A."/>
            <person name="Asamizu E."/>
            <person name="Nakamura Y."/>
            <person name="Miyajima N."/>
            <person name="Hirosawa M."/>
            <person name="Sugiura M."/>
            <person name="Sasamoto S."/>
            <person name="Kimura T."/>
            <person name="Hosouchi T."/>
            <person name="Matsuno A."/>
            <person name="Muraki A."/>
            <person name="Nakazaki N."/>
            <person name="Naruo K."/>
            <person name="Okumura S."/>
            <person name="Shimpo S."/>
            <person name="Takeuchi C."/>
            <person name="Wada T."/>
            <person name="Watanabe A."/>
            <person name="Yamada M."/>
            <person name="Yasuda M."/>
            <person name="Tabata S."/>
        </authorList>
    </citation>
    <scope>NUCLEOTIDE SEQUENCE [LARGE SCALE GENOMIC DNA]</scope>
    <source>
        <strain>ATCC 27184 / PCC 6803 / Kazusa</strain>
    </source>
</reference>
<organism>
    <name type="scientific">Synechocystis sp. (strain ATCC 27184 / PCC 6803 / Kazusa)</name>
    <dbReference type="NCBI Taxonomy" id="1111708"/>
    <lineage>
        <taxon>Bacteria</taxon>
        <taxon>Bacillati</taxon>
        <taxon>Cyanobacteriota</taxon>
        <taxon>Cyanophyceae</taxon>
        <taxon>Synechococcales</taxon>
        <taxon>Merismopediaceae</taxon>
        <taxon>Synechocystis</taxon>
    </lineage>
</organism>
<name>PHOL_SYNY3</name>
<sequence length="328" mass="36049">MSQTTATLPLPSPESAIALAGSGEDNLTYLAHHTGAKLILRGQELMVVGTEKAVARVMAVLQSLAPYWQSAKAISRPDLMTAFHALDTGKQEEHQALQKTVLAKTRRGEIVRAKTFRQRQYIKAIQKHDVTFCIGPAGTGKTFLAAVLAVQALLNNECDRLILTRPAVEAGEKLGFLPGDLQQKVDPFLRPLYDALYEFIEPEKIPDLMERGKIEVAPLAYMRGRTLTNAFVIVDEAQNTTPAQLKMVLTRLGFGSKMIVTGDITQTDLPNYQKSGLQVAQTILKDVEGVAFCYLNQADVVRHPLVQRIVEAYERSENTSPPAPKPSS</sequence>
<gene>
    <name type="ordered locus">slr2047</name>
</gene>
<comment type="subcellular location">
    <subcellularLocation>
        <location evidence="2">Cytoplasm</location>
    </subcellularLocation>
</comment>
<comment type="similarity">
    <text evidence="2">Belongs to the PhoH family.</text>
</comment>
<feature type="chain" id="PRO_0000201160" description="PhoH-like protein">
    <location>
        <begin position="1"/>
        <end position="328"/>
    </location>
</feature>
<feature type="binding site" evidence="1">
    <location>
        <begin position="135"/>
        <end position="142"/>
    </location>
    <ligand>
        <name>ATP</name>
        <dbReference type="ChEBI" id="CHEBI:30616"/>
    </ligand>
</feature>